<dbReference type="EMBL" id="CU928161">
    <property type="protein sequence ID" value="CAR03019.1"/>
    <property type="molecule type" value="Genomic_DNA"/>
</dbReference>
<dbReference type="RefSeq" id="WP_000190985.1">
    <property type="nucleotide sequence ID" value="NC_011742.1"/>
</dbReference>
<dbReference type="SMR" id="B7MA12"/>
<dbReference type="KEGG" id="ecz:ECS88_1707"/>
<dbReference type="HOGENOM" id="CLU_037628_6_2_6"/>
<dbReference type="UniPathway" id="UPA00488"/>
<dbReference type="Proteomes" id="UP000000747">
    <property type="component" value="Chromosome"/>
</dbReference>
<dbReference type="GO" id="GO:0003700">
    <property type="term" value="F:DNA-binding transcription factor activity"/>
    <property type="evidence" value="ECO:0007669"/>
    <property type="project" value="TreeGrafter"/>
</dbReference>
<dbReference type="GO" id="GO:0000976">
    <property type="term" value="F:transcription cis-regulatory region binding"/>
    <property type="evidence" value="ECO:0007669"/>
    <property type="project" value="TreeGrafter"/>
</dbReference>
<dbReference type="GO" id="GO:0045892">
    <property type="term" value="P:negative regulation of DNA-templated transcription"/>
    <property type="evidence" value="ECO:0007669"/>
    <property type="project" value="UniProtKB-UniRule"/>
</dbReference>
<dbReference type="GO" id="GO:0006164">
    <property type="term" value="P:purine nucleotide biosynthetic process"/>
    <property type="evidence" value="ECO:0007669"/>
    <property type="project" value="UniProtKB-UniPathway"/>
</dbReference>
<dbReference type="CDD" id="cd01392">
    <property type="entry name" value="HTH_LacI"/>
    <property type="match status" value="1"/>
</dbReference>
<dbReference type="CDD" id="cd06275">
    <property type="entry name" value="PBP1_PurR"/>
    <property type="match status" value="1"/>
</dbReference>
<dbReference type="FunFam" id="1.10.260.40:FF:000002">
    <property type="entry name" value="HTH-type transcriptional repressor PurR"/>
    <property type="match status" value="1"/>
</dbReference>
<dbReference type="FunFam" id="3.40.50.2300:FF:000045">
    <property type="entry name" value="HTH-type transcriptional repressor PurR"/>
    <property type="match status" value="1"/>
</dbReference>
<dbReference type="Gene3D" id="3.40.50.2300">
    <property type="match status" value="2"/>
</dbReference>
<dbReference type="Gene3D" id="1.10.260.40">
    <property type="entry name" value="lambda repressor-like DNA-binding domains"/>
    <property type="match status" value="1"/>
</dbReference>
<dbReference type="HAMAP" id="MF_01277">
    <property type="entry name" value="HTH_type_PurR"/>
    <property type="match status" value="1"/>
</dbReference>
<dbReference type="InterPro" id="IPR000843">
    <property type="entry name" value="HTH_LacI"/>
</dbReference>
<dbReference type="InterPro" id="IPR046335">
    <property type="entry name" value="LacI/GalR-like_sensor"/>
</dbReference>
<dbReference type="InterPro" id="IPR010982">
    <property type="entry name" value="Lambda_DNA-bd_dom_sf"/>
</dbReference>
<dbReference type="InterPro" id="IPR028082">
    <property type="entry name" value="Peripla_BP_I"/>
</dbReference>
<dbReference type="InterPro" id="IPR023588">
    <property type="entry name" value="Tscrpt_reg_HTH_PurR"/>
</dbReference>
<dbReference type="NCBIfam" id="NF007979">
    <property type="entry name" value="PRK10703.1"/>
    <property type="match status" value="1"/>
</dbReference>
<dbReference type="PANTHER" id="PTHR30146:SF148">
    <property type="entry name" value="HTH-TYPE TRANSCRIPTIONAL REPRESSOR PURR-RELATED"/>
    <property type="match status" value="1"/>
</dbReference>
<dbReference type="PANTHER" id="PTHR30146">
    <property type="entry name" value="LACI-RELATED TRANSCRIPTIONAL REPRESSOR"/>
    <property type="match status" value="1"/>
</dbReference>
<dbReference type="Pfam" id="PF00356">
    <property type="entry name" value="LacI"/>
    <property type="match status" value="1"/>
</dbReference>
<dbReference type="Pfam" id="PF13377">
    <property type="entry name" value="Peripla_BP_3"/>
    <property type="match status" value="1"/>
</dbReference>
<dbReference type="PRINTS" id="PR00036">
    <property type="entry name" value="HTHLACI"/>
</dbReference>
<dbReference type="SMART" id="SM00354">
    <property type="entry name" value="HTH_LACI"/>
    <property type="match status" value="1"/>
</dbReference>
<dbReference type="SUPFAM" id="SSF47413">
    <property type="entry name" value="lambda repressor-like DNA-binding domains"/>
    <property type="match status" value="1"/>
</dbReference>
<dbReference type="SUPFAM" id="SSF53822">
    <property type="entry name" value="Periplasmic binding protein-like I"/>
    <property type="match status" value="1"/>
</dbReference>
<dbReference type="PROSITE" id="PS00356">
    <property type="entry name" value="HTH_LACI_1"/>
    <property type="match status" value="1"/>
</dbReference>
<dbReference type="PROSITE" id="PS50932">
    <property type="entry name" value="HTH_LACI_2"/>
    <property type="match status" value="1"/>
</dbReference>
<protein>
    <recommendedName>
        <fullName evidence="1">HTH-type transcriptional repressor PurR</fullName>
    </recommendedName>
    <alternativeName>
        <fullName evidence="1">Pur regulon repressor</fullName>
    </alternativeName>
    <alternativeName>
        <fullName evidence="1">Purine nucleotide synthesis repressor</fullName>
    </alternativeName>
</protein>
<keyword id="KW-0238">DNA-binding</keyword>
<keyword id="KW-0658">Purine biosynthesis</keyword>
<keyword id="KW-1185">Reference proteome</keyword>
<keyword id="KW-0678">Repressor</keyword>
<keyword id="KW-0804">Transcription</keyword>
<keyword id="KW-0805">Transcription regulation</keyword>
<proteinExistence type="inferred from homology"/>
<gene>
    <name evidence="1" type="primary">purR</name>
    <name type="ordered locus">ECS88_1707</name>
</gene>
<organism>
    <name type="scientific">Escherichia coli O45:K1 (strain S88 / ExPEC)</name>
    <dbReference type="NCBI Taxonomy" id="585035"/>
    <lineage>
        <taxon>Bacteria</taxon>
        <taxon>Pseudomonadati</taxon>
        <taxon>Pseudomonadota</taxon>
        <taxon>Gammaproteobacteria</taxon>
        <taxon>Enterobacterales</taxon>
        <taxon>Enterobacteriaceae</taxon>
        <taxon>Escherichia</taxon>
    </lineage>
</organism>
<feature type="chain" id="PRO_1000140286" description="HTH-type transcriptional repressor PurR">
    <location>
        <begin position="1"/>
        <end position="341"/>
    </location>
</feature>
<feature type="domain" description="HTH lacI-type" evidence="1">
    <location>
        <begin position="2"/>
        <end position="56"/>
    </location>
</feature>
<feature type="DNA-binding region" description="H-T-H motif" evidence="1">
    <location>
        <begin position="4"/>
        <end position="23"/>
    </location>
</feature>
<feature type="DNA-binding region" evidence="1">
    <location>
        <begin position="48"/>
        <end position="56"/>
    </location>
</feature>
<feature type="binding site" evidence="1">
    <location>
        <position position="73"/>
    </location>
    <ligand>
        <name>hypoxanthine</name>
        <dbReference type="ChEBI" id="CHEBI:17368"/>
    </ligand>
</feature>
<feature type="binding site" evidence="1">
    <location>
        <position position="190"/>
    </location>
    <ligand>
        <name>hypoxanthine</name>
        <dbReference type="ChEBI" id="CHEBI:17368"/>
    </ligand>
</feature>
<feature type="binding site" evidence="1">
    <location>
        <position position="192"/>
    </location>
    <ligand>
        <name>hypoxanthine</name>
        <dbReference type="ChEBI" id="CHEBI:17368"/>
    </ligand>
</feature>
<feature type="binding site" evidence="1">
    <location>
        <position position="221"/>
    </location>
    <ligand>
        <name>hypoxanthine</name>
        <dbReference type="ChEBI" id="CHEBI:17368"/>
    </ligand>
</feature>
<feature type="binding site" evidence="1">
    <location>
        <position position="275"/>
    </location>
    <ligand>
        <name>hypoxanthine</name>
        <dbReference type="ChEBI" id="CHEBI:17368"/>
    </ligand>
</feature>
<sequence>MATIKDVAKRANVSTTTVSHVINKTRFVAEETRNAVWAAIKELHYSPSAVARSLKVNHTKSIGLLATSSEAAYFAEIIEAVEKNCFQKGYTLILGNAWNNLEKQRAYLSMMAQKRVDGLLVMCSEYPEPLLAMLEEYRHIPMVVMDWGEAKADFTDAVIDNAFEGGYMAGRYLIERGHREIGVIPGPLERNTGAGRLAGFMKAMEEAMIKVPESWIVQGDFEPESGYRAMQQILSQSHRPTAVFCGGDIMAMGALCAADEMGLRVPQDVSLIGYDNVRNARYFTPALTTIHQPKDSLGETAFNMLLDRIVNKREEPQSIEVHPRLIERRSVADGPFRDYRR</sequence>
<evidence type="ECO:0000255" key="1">
    <source>
        <dbReference type="HAMAP-Rule" id="MF_01277"/>
    </source>
</evidence>
<comment type="function">
    <text evidence="1">Is the main repressor of the genes involved in the de novo synthesis of purine nucleotides, regulating purB, purC, purEK, purF, purHD, purL, purMN and guaBA expression. PurR is allosterically activated to bind its cognate DNA by binding the purine corepressors, hypoxanthine or guanine, thereby effecting transcription repression.</text>
</comment>
<comment type="pathway">
    <text>Purine metabolism; purine nucleotide biosynthesis [regulation].</text>
</comment>
<comment type="subunit">
    <text evidence="1">Homodimer.</text>
</comment>
<comment type="domain">
    <text evidence="1">Consists of two structural and functional domains: an N-terminal DNA-binding domain, approximately the first 60 residues, and a larger C-terminal domain, approximately 280 residues, which imparts the function of corepressor binding and oligomerization.</text>
</comment>
<accession>B7MA12</accession>
<name>PURR_ECO45</name>
<reference key="1">
    <citation type="journal article" date="2009" name="PLoS Genet.">
        <title>Organised genome dynamics in the Escherichia coli species results in highly diverse adaptive paths.</title>
        <authorList>
            <person name="Touchon M."/>
            <person name="Hoede C."/>
            <person name="Tenaillon O."/>
            <person name="Barbe V."/>
            <person name="Baeriswyl S."/>
            <person name="Bidet P."/>
            <person name="Bingen E."/>
            <person name="Bonacorsi S."/>
            <person name="Bouchier C."/>
            <person name="Bouvet O."/>
            <person name="Calteau A."/>
            <person name="Chiapello H."/>
            <person name="Clermont O."/>
            <person name="Cruveiller S."/>
            <person name="Danchin A."/>
            <person name="Diard M."/>
            <person name="Dossat C."/>
            <person name="Karoui M.E."/>
            <person name="Frapy E."/>
            <person name="Garry L."/>
            <person name="Ghigo J.M."/>
            <person name="Gilles A.M."/>
            <person name="Johnson J."/>
            <person name="Le Bouguenec C."/>
            <person name="Lescat M."/>
            <person name="Mangenot S."/>
            <person name="Martinez-Jehanne V."/>
            <person name="Matic I."/>
            <person name="Nassif X."/>
            <person name="Oztas S."/>
            <person name="Petit M.A."/>
            <person name="Pichon C."/>
            <person name="Rouy Z."/>
            <person name="Ruf C.S."/>
            <person name="Schneider D."/>
            <person name="Tourret J."/>
            <person name="Vacherie B."/>
            <person name="Vallenet D."/>
            <person name="Medigue C."/>
            <person name="Rocha E.P.C."/>
            <person name="Denamur E."/>
        </authorList>
    </citation>
    <scope>NUCLEOTIDE SEQUENCE [LARGE SCALE GENOMIC DNA]</scope>
    <source>
        <strain>S88 / ExPEC</strain>
    </source>
</reference>